<accession>Q54WI8</accession>
<organism>
    <name type="scientific">Dictyostelium discoideum</name>
    <name type="common">Social amoeba</name>
    <dbReference type="NCBI Taxonomy" id="44689"/>
    <lineage>
        <taxon>Eukaryota</taxon>
        <taxon>Amoebozoa</taxon>
        <taxon>Evosea</taxon>
        <taxon>Eumycetozoa</taxon>
        <taxon>Dictyostelia</taxon>
        <taxon>Dictyosteliales</taxon>
        <taxon>Dictyosteliaceae</taxon>
        <taxon>Dictyostelium</taxon>
    </lineage>
</organism>
<proteinExistence type="inferred from homology"/>
<protein>
    <recommendedName>
        <fullName>26S proteasome non-ATPase regulatory subunit 7</fullName>
    </recommendedName>
    <alternativeName>
        <fullName>26S proteasome regulatory subunit RPN8</fullName>
    </alternativeName>
</protein>
<comment type="function">
    <text evidence="1">Acts as a regulatory subunit of the 26S proteasome which is involved in the ATP-dependent degradation of ubiquitinated proteins.</text>
</comment>
<comment type="similarity">
    <text evidence="4">Belongs to the peptidase M67A family.</text>
</comment>
<gene>
    <name type="primary">psmD7</name>
    <name type="ORF">DDB_G0279633</name>
</gene>
<evidence type="ECO:0000250" key="1"/>
<evidence type="ECO:0000255" key="2">
    <source>
        <dbReference type="PROSITE-ProRule" id="PRU01182"/>
    </source>
</evidence>
<evidence type="ECO:0000256" key="3">
    <source>
        <dbReference type="SAM" id="MobiDB-lite"/>
    </source>
</evidence>
<evidence type="ECO:0000305" key="4"/>
<reference key="1">
    <citation type="journal article" date="2005" name="Nature">
        <title>The genome of the social amoeba Dictyostelium discoideum.</title>
        <authorList>
            <person name="Eichinger L."/>
            <person name="Pachebat J.A."/>
            <person name="Gloeckner G."/>
            <person name="Rajandream M.A."/>
            <person name="Sucgang R."/>
            <person name="Berriman M."/>
            <person name="Song J."/>
            <person name="Olsen R."/>
            <person name="Szafranski K."/>
            <person name="Xu Q."/>
            <person name="Tunggal B."/>
            <person name="Kummerfeld S."/>
            <person name="Madera M."/>
            <person name="Konfortov B.A."/>
            <person name="Rivero F."/>
            <person name="Bankier A.T."/>
            <person name="Lehmann R."/>
            <person name="Hamlin N."/>
            <person name="Davies R."/>
            <person name="Gaudet P."/>
            <person name="Fey P."/>
            <person name="Pilcher K."/>
            <person name="Chen G."/>
            <person name="Saunders D."/>
            <person name="Sodergren E.J."/>
            <person name="Davis P."/>
            <person name="Kerhornou A."/>
            <person name="Nie X."/>
            <person name="Hall N."/>
            <person name="Anjard C."/>
            <person name="Hemphill L."/>
            <person name="Bason N."/>
            <person name="Farbrother P."/>
            <person name="Desany B."/>
            <person name="Just E."/>
            <person name="Morio T."/>
            <person name="Rost R."/>
            <person name="Churcher C.M."/>
            <person name="Cooper J."/>
            <person name="Haydock S."/>
            <person name="van Driessche N."/>
            <person name="Cronin A."/>
            <person name="Goodhead I."/>
            <person name="Muzny D.M."/>
            <person name="Mourier T."/>
            <person name="Pain A."/>
            <person name="Lu M."/>
            <person name="Harper D."/>
            <person name="Lindsay R."/>
            <person name="Hauser H."/>
            <person name="James K.D."/>
            <person name="Quiles M."/>
            <person name="Madan Babu M."/>
            <person name="Saito T."/>
            <person name="Buchrieser C."/>
            <person name="Wardroper A."/>
            <person name="Felder M."/>
            <person name="Thangavelu M."/>
            <person name="Johnson D."/>
            <person name="Knights A."/>
            <person name="Loulseged H."/>
            <person name="Mungall K.L."/>
            <person name="Oliver K."/>
            <person name="Price C."/>
            <person name="Quail M.A."/>
            <person name="Urushihara H."/>
            <person name="Hernandez J."/>
            <person name="Rabbinowitsch E."/>
            <person name="Steffen D."/>
            <person name="Sanders M."/>
            <person name="Ma J."/>
            <person name="Kohara Y."/>
            <person name="Sharp S."/>
            <person name="Simmonds M.N."/>
            <person name="Spiegler S."/>
            <person name="Tivey A."/>
            <person name="Sugano S."/>
            <person name="White B."/>
            <person name="Walker D."/>
            <person name="Woodward J.R."/>
            <person name="Winckler T."/>
            <person name="Tanaka Y."/>
            <person name="Shaulsky G."/>
            <person name="Schleicher M."/>
            <person name="Weinstock G.M."/>
            <person name="Rosenthal A."/>
            <person name="Cox E.C."/>
            <person name="Chisholm R.L."/>
            <person name="Gibbs R.A."/>
            <person name="Loomis W.F."/>
            <person name="Platzer M."/>
            <person name="Kay R.R."/>
            <person name="Williams J.G."/>
            <person name="Dear P.H."/>
            <person name="Noegel A.A."/>
            <person name="Barrell B.G."/>
            <person name="Kuspa A."/>
        </authorList>
    </citation>
    <scope>NUCLEOTIDE SEQUENCE [LARGE SCALE GENOMIC DNA]</scope>
    <source>
        <strain>AX4</strain>
    </source>
</reference>
<dbReference type="EMBL" id="AAFI02000032">
    <property type="protein sequence ID" value="EAL67591.1"/>
    <property type="molecule type" value="Genomic_DNA"/>
</dbReference>
<dbReference type="RefSeq" id="XP_641565.1">
    <property type="nucleotide sequence ID" value="XM_636473.1"/>
</dbReference>
<dbReference type="SMR" id="Q54WI8"/>
<dbReference type="FunCoup" id="Q54WI8">
    <property type="interactions" value="719"/>
</dbReference>
<dbReference type="STRING" id="44689.Q54WI8"/>
<dbReference type="MEROPS" id="M67.973"/>
<dbReference type="PaxDb" id="44689-DDB0232987"/>
<dbReference type="EnsemblProtists" id="EAL67591">
    <property type="protein sequence ID" value="EAL67591"/>
    <property type="gene ID" value="DDB_G0279633"/>
</dbReference>
<dbReference type="GeneID" id="8622140"/>
<dbReference type="KEGG" id="ddi:DDB_G0279633"/>
<dbReference type="dictyBase" id="DDB_G0279633">
    <property type="gene designation" value="psmD7"/>
</dbReference>
<dbReference type="VEuPathDB" id="AmoebaDB:DDB_G0279633"/>
<dbReference type="eggNOG" id="KOG1556">
    <property type="taxonomic scope" value="Eukaryota"/>
</dbReference>
<dbReference type="HOGENOM" id="CLU_027018_3_0_1"/>
<dbReference type="InParanoid" id="Q54WI8"/>
<dbReference type="OMA" id="HAMSIKT"/>
<dbReference type="PhylomeDB" id="Q54WI8"/>
<dbReference type="Reactome" id="R-DDI-1236978">
    <property type="pathway name" value="Cross-presentation of soluble exogenous antigens (endosomes)"/>
</dbReference>
<dbReference type="Reactome" id="R-DDI-174084">
    <property type="pathway name" value="Autodegradation of Cdh1 by Cdh1:APC/C"/>
</dbReference>
<dbReference type="Reactome" id="R-DDI-174154">
    <property type="pathway name" value="APC/C:Cdc20 mediated degradation of Securin"/>
</dbReference>
<dbReference type="Reactome" id="R-DDI-174178">
    <property type="pathway name" value="APC/C:Cdh1 mediated degradation of Cdc20 and other APC/C:Cdh1 targeted proteins in late mitosis/early G1"/>
</dbReference>
<dbReference type="Reactome" id="R-DDI-2467813">
    <property type="pathway name" value="Separation of Sister Chromatids"/>
</dbReference>
<dbReference type="Reactome" id="R-DDI-349425">
    <property type="pathway name" value="Autodegradation of the E3 ubiquitin ligase COP1"/>
</dbReference>
<dbReference type="Reactome" id="R-DDI-382556">
    <property type="pathway name" value="ABC-family proteins mediated transport"/>
</dbReference>
<dbReference type="Reactome" id="R-DDI-450408">
    <property type="pathway name" value="AUF1 (hnRNP D0) binds and destabilizes mRNA"/>
</dbReference>
<dbReference type="Reactome" id="R-DDI-4641258">
    <property type="pathway name" value="Degradation of DVL"/>
</dbReference>
<dbReference type="Reactome" id="R-DDI-5632684">
    <property type="pathway name" value="Hedgehog 'on' state"/>
</dbReference>
<dbReference type="Reactome" id="R-DDI-5658442">
    <property type="pathway name" value="Regulation of RAS by GAPs"/>
</dbReference>
<dbReference type="Reactome" id="R-DDI-5687128">
    <property type="pathway name" value="MAPK6/MAPK4 signaling"/>
</dbReference>
<dbReference type="Reactome" id="R-DDI-5689603">
    <property type="pathway name" value="UCH proteinases"/>
</dbReference>
<dbReference type="Reactome" id="R-DDI-5689880">
    <property type="pathway name" value="Ub-specific processing proteases"/>
</dbReference>
<dbReference type="Reactome" id="R-DDI-6798695">
    <property type="pathway name" value="Neutrophil degranulation"/>
</dbReference>
<dbReference type="Reactome" id="R-DDI-68949">
    <property type="pathway name" value="Orc1 removal from chromatin"/>
</dbReference>
<dbReference type="Reactome" id="R-DDI-69017">
    <property type="pathway name" value="CDK-mediated phosphorylation and removal of Cdc6"/>
</dbReference>
<dbReference type="Reactome" id="R-DDI-69601">
    <property type="pathway name" value="Ubiquitin Mediated Degradation of Phosphorylated Cdc25A"/>
</dbReference>
<dbReference type="Reactome" id="R-DDI-8854050">
    <property type="pathway name" value="FBXL7 down-regulates AURKA during mitotic entry and in early mitosis"/>
</dbReference>
<dbReference type="Reactome" id="R-DDI-8948751">
    <property type="pathway name" value="Regulation of PTEN stability and activity"/>
</dbReference>
<dbReference type="Reactome" id="R-DDI-8951664">
    <property type="pathway name" value="Neddylation"/>
</dbReference>
<dbReference type="Reactome" id="R-DDI-9755511">
    <property type="pathway name" value="KEAP1-NFE2L2 pathway"/>
</dbReference>
<dbReference type="Reactome" id="R-DDI-983168">
    <property type="pathway name" value="Antigen processing: Ubiquitination &amp; Proteasome degradation"/>
</dbReference>
<dbReference type="Reactome" id="R-DDI-9907900">
    <property type="pathway name" value="Proteasome assembly"/>
</dbReference>
<dbReference type="PRO" id="PR:Q54WI8"/>
<dbReference type="Proteomes" id="UP000002195">
    <property type="component" value="Chromosome 3"/>
</dbReference>
<dbReference type="GO" id="GO:0000502">
    <property type="term" value="C:proteasome complex"/>
    <property type="evidence" value="ECO:0000318"/>
    <property type="project" value="GO_Central"/>
</dbReference>
<dbReference type="GO" id="GO:0005838">
    <property type="term" value="C:proteasome regulatory particle"/>
    <property type="evidence" value="ECO:0007669"/>
    <property type="project" value="InterPro"/>
</dbReference>
<dbReference type="GO" id="GO:0008237">
    <property type="term" value="F:metallopeptidase activity"/>
    <property type="evidence" value="ECO:0007669"/>
    <property type="project" value="InterPro"/>
</dbReference>
<dbReference type="GO" id="GO:0043161">
    <property type="term" value="P:proteasome-mediated ubiquitin-dependent protein catabolic process"/>
    <property type="evidence" value="ECO:0000318"/>
    <property type="project" value="GO_Central"/>
</dbReference>
<dbReference type="CDD" id="cd08062">
    <property type="entry name" value="MPN_RPN7_8"/>
    <property type="match status" value="1"/>
</dbReference>
<dbReference type="FunFam" id="3.40.140.10:FF:000013">
    <property type="entry name" value="26S proteasome non-ATPase regulatory subunit 7"/>
    <property type="match status" value="1"/>
</dbReference>
<dbReference type="Gene3D" id="3.40.140.10">
    <property type="entry name" value="Cytidine Deaminase, domain 2"/>
    <property type="match status" value="1"/>
</dbReference>
<dbReference type="InterPro" id="IPR024969">
    <property type="entry name" value="EIF3F/CSN6-like_C"/>
</dbReference>
<dbReference type="InterPro" id="IPR000555">
    <property type="entry name" value="JAMM/MPN+_dom"/>
</dbReference>
<dbReference type="InterPro" id="IPR037518">
    <property type="entry name" value="MPN"/>
</dbReference>
<dbReference type="InterPro" id="IPR033858">
    <property type="entry name" value="MPN_RPN7_8"/>
</dbReference>
<dbReference type="PANTHER" id="PTHR10540:SF7">
    <property type="entry name" value="26S PROTEASOME NON-ATPASE REGULATORY SUBUNIT 7"/>
    <property type="match status" value="1"/>
</dbReference>
<dbReference type="PANTHER" id="PTHR10540">
    <property type="entry name" value="EUKARYOTIC TRANSLATION INITIATION FACTOR 3 SUBUNIT F-RELATED"/>
    <property type="match status" value="1"/>
</dbReference>
<dbReference type="Pfam" id="PF01398">
    <property type="entry name" value="JAB"/>
    <property type="match status" value="1"/>
</dbReference>
<dbReference type="Pfam" id="PF13012">
    <property type="entry name" value="MitMem_reg"/>
    <property type="match status" value="1"/>
</dbReference>
<dbReference type="SMART" id="SM00232">
    <property type="entry name" value="JAB_MPN"/>
    <property type="match status" value="1"/>
</dbReference>
<dbReference type="PROSITE" id="PS50249">
    <property type="entry name" value="MPN"/>
    <property type="match status" value="1"/>
</dbReference>
<sequence length="325" mass="36303">MSTFPTSTIVHPTVLLSVVDHYNRVAKDTNKRVVGALLGSNNKGVVDVSNCYGLPFEEDEANPNIWFLDHNFHENMFAMFKKINARENVVGWYSTGPKIRPADQDINELFRRYTPNPVMVIIDVAPKELGIPTKSYVTVEEINKDTSESTMRFQHIPSSIDAVEAEEICIEHLLRDVKDSSISSLTTQITDKKISLKHLLTNLQEMQHYLKLVCDGTLPPNHQIIGYIQDIINLSPNLNANEISKSFAVQNNDTMSVIYLSSMIRSIIALHNLIINKTANREAEKKADIINSTPPTTATSPSVADKGKEKEQNAFNGADKPSKQA</sequence>
<keyword id="KW-0647">Proteasome</keyword>
<keyword id="KW-1185">Reference proteome</keyword>
<feature type="chain" id="PRO_0000330327" description="26S proteasome non-ATPase regulatory subunit 7">
    <location>
        <begin position="1"/>
        <end position="325"/>
    </location>
</feature>
<feature type="domain" description="MPN" evidence="2">
    <location>
        <begin position="8"/>
        <end position="142"/>
    </location>
</feature>
<feature type="region of interest" description="Disordered" evidence="3">
    <location>
        <begin position="285"/>
        <end position="325"/>
    </location>
</feature>
<feature type="compositionally biased region" description="Low complexity" evidence="3">
    <location>
        <begin position="292"/>
        <end position="302"/>
    </location>
</feature>
<name>PSMD7_DICDI</name>